<proteinExistence type="evidence at transcript level"/>
<comment type="function">
    <text evidence="1">Potential apoptotic regulator.</text>
</comment>
<comment type="subcellular location">
    <subcellularLocation>
        <location evidence="4">Membrane</location>
        <topology evidence="4">Multi-pass membrane protein</topology>
    </subcellularLocation>
</comment>
<comment type="similarity">
    <text evidence="4">Belongs to the BI1 family. LFG subfamily.</text>
</comment>
<dbReference type="EMBL" id="BC062074">
    <property type="protein sequence ID" value="AAH62074.1"/>
    <property type="molecule type" value="mRNA"/>
</dbReference>
<dbReference type="RefSeq" id="NP_695220.4">
    <property type="nucleotide sequence ID" value="NM_153308.5"/>
</dbReference>
<dbReference type="SMR" id="Q6P6R0"/>
<dbReference type="FunCoup" id="Q6P6R0">
    <property type="interactions" value="503"/>
</dbReference>
<dbReference type="STRING" id="10116.ENSRNOP00000056356"/>
<dbReference type="BindingDB" id="Q6P6R0"/>
<dbReference type="ChEMBL" id="CHEMBL4129"/>
<dbReference type="PhosphoSitePlus" id="Q6P6R0"/>
<dbReference type="PaxDb" id="10116-ENSRNOP00000056356"/>
<dbReference type="GeneID" id="266668"/>
<dbReference type="KEGG" id="rno:266668"/>
<dbReference type="UCSC" id="RGD:628873">
    <property type="organism name" value="rat"/>
</dbReference>
<dbReference type="AGR" id="RGD:628873"/>
<dbReference type="CTD" id="2907"/>
<dbReference type="RGD" id="628873">
    <property type="gene designation" value="Grina"/>
</dbReference>
<dbReference type="VEuPathDB" id="HostDB:ENSRNOG00000029941"/>
<dbReference type="eggNOG" id="KOG2322">
    <property type="taxonomic scope" value="Eukaryota"/>
</dbReference>
<dbReference type="HOGENOM" id="CLU_058671_3_0_1"/>
<dbReference type="InParanoid" id="Q6P6R0"/>
<dbReference type="OrthoDB" id="7933078at2759"/>
<dbReference type="PRO" id="PR:Q6P6R0"/>
<dbReference type="Proteomes" id="UP000002494">
    <property type="component" value="Chromosome 7"/>
</dbReference>
<dbReference type="Bgee" id="ENSRNOG00000029941">
    <property type="expression patterns" value="Expressed in cerebellum and 18 other cell types or tissues"/>
</dbReference>
<dbReference type="GO" id="GO:0005783">
    <property type="term" value="C:endoplasmic reticulum"/>
    <property type="evidence" value="ECO:0000266"/>
    <property type="project" value="RGD"/>
</dbReference>
<dbReference type="GO" id="GO:0005794">
    <property type="term" value="C:Golgi apparatus"/>
    <property type="evidence" value="ECO:0000266"/>
    <property type="project" value="RGD"/>
</dbReference>
<dbReference type="GO" id="GO:0000139">
    <property type="term" value="C:Golgi membrane"/>
    <property type="evidence" value="ECO:0000266"/>
    <property type="project" value="RGD"/>
</dbReference>
<dbReference type="GO" id="GO:0016020">
    <property type="term" value="C:membrane"/>
    <property type="evidence" value="ECO:0000318"/>
    <property type="project" value="GO_Central"/>
</dbReference>
<dbReference type="GO" id="GO:0005262">
    <property type="term" value="F:calcium channel activity"/>
    <property type="evidence" value="ECO:0000318"/>
    <property type="project" value="GO_Central"/>
</dbReference>
<dbReference type="GO" id="GO:0005261">
    <property type="term" value="F:monoatomic cation channel activity"/>
    <property type="evidence" value="ECO:0000303"/>
    <property type="project" value="RGD"/>
</dbReference>
<dbReference type="GO" id="GO:0044325">
    <property type="term" value="F:transmembrane transporter binding"/>
    <property type="evidence" value="ECO:0000266"/>
    <property type="project" value="RGD"/>
</dbReference>
<dbReference type="GO" id="GO:0097190">
    <property type="term" value="P:apoptotic signaling pathway"/>
    <property type="evidence" value="ECO:0000318"/>
    <property type="project" value="GO_Central"/>
</dbReference>
<dbReference type="GO" id="GO:0032469">
    <property type="term" value="P:endoplasmic reticulum calcium ion homeostasis"/>
    <property type="evidence" value="ECO:0000266"/>
    <property type="project" value="RGD"/>
</dbReference>
<dbReference type="GO" id="GO:1902236">
    <property type="term" value="P:negative regulation of endoplasmic reticulum stress-induced intrinsic apoptotic signaling pathway"/>
    <property type="evidence" value="ECO:0000266"/>
    <property type="project" value="RGD"/>
</dbReference>
<dbReference type="GO" id="GO:1902042">
    <property type="term" value="P:negative regulation of extrinsic apoptotic signaling pathway via death domain receptors"/>
    <property type="evidence" value="ECO:0000318"/>
    <property type="project" value="GO_Central"/>
</dbReference>
<dbReference type="GO" id="GO:0043524">
    <property type="term" value="P:negative regulation of neuron apoptotic process"/>
    <property type="evidence" value="ECO:0000318"/>
    <property type="project" value="GO_Central"/>
</dbReference>
<dbReference type="CDD" id="cd10428">
    <property type="entry name" value="LFG_like"/>
    <property type="match status" value="1"/>
</dbReference>
<dbReference type="InterPro" id="IPR006214">
    <property type="entry name" value="Bax_inhibitor_1-related"/>
</dbReference>
<dbReference type="PANTHER" id="PTHR23291">
    <property type="entry name" value="BAX INHIBITOR-RELATED"/>
    <property type="match status" value="1"/>
</dbReference>
<dbReference type="PANTHER" id="PTHR23291:SF16">
    <property type="entry name" value="PROTEIN LIFEGUARD 1"/>
    <property type="match status" value="1"/>
</dbReference>
<dbReference type="Pfam" id="PF01027">
    <property type="entry name" value="Bax1-I"/>
    <property type="match status" value="1"/>
</dbReference>
<evidence type="ECO:0000250" key="1"/>
<evidence type="ECO:0000255" key="2"/>
<evidence type="ECO:0000256" key="3">
    <source>
        <dbReference type="SAM" id="MobiDB-lite"/>
    </source>
</evidence>
<evidence type="ECO:0000305" key="4"/>
<reference key="1">
    <citation type="journal article" date="2004" name="Genome Res.">
        <title>The status, quality, and expansion of the NIH full-length cDNA project: the Mammalian Gene Collection (MGC).</title>
        <authorList>
            <consortium name="The MGC Project Team"/>
        </authorList>
    </citation>
    <scope>NUCLEOTIDE SEQUENCE [LARGE SCALE MRNA]</scope>
    <source>
        <tissue>Prostate</tissue>
    </source>
</reference>
<gene>
    <name type="primary">Grina</name>
    <name type="synonym">Lfg1</name>
    <name type="synonym">Nmdara1</name>
</gene>
<name>LFG1_RAT</name>
<sequence>MSHEKSFLVSGDSYPPPNPGYPVGPQAPMPPYVQPPYPGAPYPQAAFQPSPYGQPGYPHGPGPYPQGGYPQGPYPQGGYPQGPYPQSPFPPNPYGQPPPFQDPGSPQHGNYQEEGPPSYYDNQDFPSVNWDKSIRQAFIRKVFLVLTLQLSVTLSTVAIFTFVGEVKGFVRANVWTYYVSYAIFFISLIVLSCCGDFRRKHPWNLVALSILTISLSYMVGMIASFYNTEAVIMAVGITTAVCFTVVIFSMQTRYDFTSCMGVLLVSVVVLFIFAILCIFIRNRILEIVYASLGALLFTCFLAVDTQLLLGNKQLSLSPEEYVFAALNLYTDIINIFLYILTIIGRAKE</sequence>
<feature type="chain" id="PRO_0000314441" description="Protein lifeguard 1">
    <location>
        <begin position="1"/>
        <end position="348"/>
    </location>
</feature>
<feature type="transmembrane region" description="Helical" evidence="2">
    <location>
        <begin position="142"/>
        <end position="162"/>
    </location>
</feature>
<feature type="transmembrane region" description="Helical" evidence="2">
    <location>
        <begin position="174"/>
        <end position="194"/>
    </location>
</feature>
<feature type="transmembrane region" description="Helical" evidence="2">
    <location>
        <begin position="205"/>
        <end position="225"/>
    </location>
</feature>
<feature type="transmembrane region" description="Helical" evidence="2">
    <location>
        <begin position="230"/>
        <end position="250"/>
    </location>
</feature>
<feature type="transmembrane region" description="Helical" evidence="2">
    <location>
        <begin position="260"/>
        <end position="280"/>
    </location>
</feature>
<feature type="transmembrane region" description="Helical" evidence="2">
    <location>
        <begin position="284"/>
        <end position="304"/>
    </location>
</feature>
<feature type="transmembrane region" description="Helical" evidence="2">
    <location>
        <begin position="323"/>
        <end position="343"/>
    </location>
</feature>
<feature type="region of interest" description="Disordered" evidence="3">
    <location>
        <begin position="1"/>
        <end position="118"/>
    </location>
</feature>
<feature type="compositionally biased region" description="Pro residues" evidence="3">
    <location>
        <begin position="14"/>
        <end position="41"/>
    </location>
</feature>
<feature type="compositionally biased region" description="Low complexity" evidence="3">
    <location>
        <begin position="42"/>
        <end position="57"/>
    </location>
</feature>
<feature type="compositionally biased region" description="Pro residues" evidence="3">
    <location>
        <begin position="82"/>
        <end position="101"/>
    </location>
</feature>
<accession>Q6P6R0</accession>
<protein>
    <recommendedName>
        <fullName>Protein lifeguard 1</fullName>
    </recommendedName>
    <alternativeName>
        <fullName>Glutamate [NMDA] receptor-associated protein 1</fullName>
    </alternativeName>
    <alternativeName>
        <fullName>NMDA receptor glutamate-binding subunit</fullName>
    </alternativeName>
</protein>
<organism>
    <name type="scientific">Rattus norvegicus</name>
    <name type="common">Rat</name>
    <dbReference type="NCBI Taxonomy" id="10116"/>
    <lineage>
        <taxon>Eukaryota</taxon>
        <taxon>Metazoa</taxon>
        <taxon>Chordata</taxon>
        <taxon>Craniata</taxon>
        <taxon>Vertebrata</taxon>
        <taxon>Euteleostomi</taxon>
        <taxon>Mammalia</taxon>
        <taxon>Eutheria</taxon>
        <taxon>Euarchontoglires</taxon>
        <taxon>Glires</taxon>
        <taxon>Rodentia</taxon>
        <taxon>Myomorpha</taxon>
        <taxon>Muroidea</taxon>
        <taxon>Muridae</taxon>
        <taxon>Murinae</taxon>
        <taxon>Rattus</taxon>
    </lineage>
</organism>
<keyword id="KW-0472">Membrane</keyword>
<keyword id="KW-1185">Reference proteome</keyword>
<keyword id="KW-0812">Transmembrane</keyword>
<keyword id="KW-1133">Transmembrane helix</keyword>